<comment type="function">
    <text evidence="2 3 4">Regulates the expression of the Rv1217c-Rv1218c multidrug efflux system and its own expression. Acts by binding to promoter regions of Rv1219c and upstream of the Rv1218c gene (PubMed:24424575). Important for survival in prolonged stationary phase and during macrophage infection (PubMed:24590482). May be used to eliminate non-growing mycobacteria (PubMed:25012658).</text>
</comment>
<comment type="activity regulation">
    <text evidence="4">Interaction with long chain acyl-CoA derivatives (oleoyl-CoA and, to lesser extent, stearoyl-CoA) prevents binding to DNA, leading to the expression of the target genes. Long chain acyl-CoA derivatives may serve as biological indicators of the bacterial metabolic state.</text>
</comment>
<comment type="subunit">
    <text evidence="2 4">Homodimer (PubMed:24424575, PubMed:25012658). Interacts with long chain acyl-CoA derivatives (PubMed:25012658). Interacts with several drugs such rhodamine 6G, ethidium and safranin O (PubMed:24424575).</text>
</comment>
<comment type="induction">
    <text evidence="2">Expression is autoregulated.</text>
</comment>
<comment type="domain">
    <text evidence="2">Contains an N-terminal DNA-binding domain and a C-terminal ligand-binding domain, which can accommodate a variety of structurally unrelated antimicrobial agents. The C-terminal domain is also involved in dimerization.</text>
</comment>
<comment type="disruption phenotype">
    <text evidence="3">Knockout mutant is impaired in long-term survival at stationary phase and does not persist during macrophage infection.</text>
</comment>
<name>RAAS_MYCTU</name>
<sequence>MRSADLTAHARIREAAIEQFGRHGFGVGLRAIAEAAGVSAALVIHHFGSKEGLRKACDDFVAEEIRSSKAAALKSNDPTTWLAQMAEIESYAPLMAYLVRSMQSGGELAKMLWQKMIDNAEEYLDEGVRAGTVKPSRDPRARARFLAITGGGGFLLYLQMHENPTDLRAALRDYAHDMVLPSLEVYTEGLLADRAMYEAFLAEAQQGEAHVG</sequence>
<reference key="1">
    <citation type="journal article" date="1998" name="Nature">
        <title>Deciphering the biology of Mycobacterium tuberculosis from the complete genome sequence.</title>
        <authorList>
            <person name="Cole S.T."/>
            <person name="Brosch R."/>
            <person name="Parkhill J."/>
            <person name="Garnier T."/>
            <person name="Churcher C.M."/>
            <person name="Harris D.E."/>
            <person name="Gordon S.V."/>
            <person name="Eiglmeier K."/>
            <person name="Gas S."/>
            <person name="Barry C.E. III"/>
            <person name="Tekaia F."/>
            <person name="Badcock K."/>
            <person name="Basham D."/>
            <person name="Brown D."/>
            <person name="Chillingworth T."/>
            <person name="Connor R."/>
            <person name="Davies R.M."/>
            <person name="Devlin K."/>
            <person name="Feltwell T."/>
            <person name="Gentles S."/>
            <person name="Hamlin N."/>
            <person name="Holroyd S."/>
            <person name="Hornsby T."/>
            <person name="Jagels K."/>
            <person name="Krogh A."/>
            <person name="McLean J."/>
            <person name="Moule S."/>
            <person name="Murphy L.D."/>
            <person name="Oliver S."/>
            <person name="Osborne J."/>
            <person name="Quail M.A."/>
            <person name="Rajandream M.A."/>
            <person name="Rogers J."/>
            <person name="Rutter S."/>
            <person name="Seeger K."/>
            <person name="Skelton S."/>
            <person name="Squares S."/>
            <person name="Squares R."/>
            <person name="Sulston J.E."/>
            <person name="Taylor K."/>
            <person name="Whitehead S."/>
            <person name="Barrell B.G."/>
        </authorList>
    </citation>
    <scope>NUCLEOTIDE SEQUENCE [LARGE SCALE GENOMIC DNA]</scope>
    <source>
        <strain>ATCC 25618 / H37Rv</strain>
    </source>
</reference>
<reference key="2">
    <citation type="journal article" date="2011" name="Mol. Cell. Proteomics">
        <title>Proteogenomic analysis of Mycobacterium tuberculosis by high resolution mass spectrometry.</title>
        <authorList>
            <person name="Kelkar D.S."/>
            <person name="Kumar D."/>
            <person name="Kumar P."/>
            <person name="Balakrishnan L."/>
            <person name="Muthusamy B."/>
            <person name="Yadav A.K."/>
            <person name="Shrivastava P."/>
            <person name="Marimuthu A."/>
            <person name="Anand S."/>
            <person name="Sundaram H."/>
            <person name="Kingsbury R."/>
            <person name="Harsha H.C."/>
            <person name="Nair B."/>
            <person name="Prasad T.S."/>
            <person name="Chauhan D.S."/>
            <person name="Katoch K."/>
            <person name="Katoch V.M."/>
            <person name="Kumar P."/>
            <person name="Chaerkady R."/>
            <person name="Ramachandran S."/>
            <person name="Dash D."/>
            <person name="Pandey A."/>
        </authorList>
    </citation>
    <scope>IDENTIFICATION BY MASS SPECTROMETRY [LARGE SCALE ANALYSIS]</scope>
    <source>
        <strain>ATCC 25618 / H37Rv</strain>
    </source>
</reference>
<reference key="3">
    <citation type="journal article" date="2014" name="Antimicrob. Agents Chemother.">
        <title>Antimicrobial treatment improves mycobacterial survival in nonpermissive growth conditions.</title>
        <authorList>
            <person name="Turapov O."/>
            <person name="Waddell S.J."/>
            <person name="Burke B."/>
            <person name="Glenn S."/>
            <person name="Sarybaeva A.A."/>
            <person name="Tudo G."/>
            <person name="Labesse G."/>
            <person name="Young D.I."/>
            <person name="Young M."/>
            <person name="Andrew P.W."/>
            <person name="Butcher P.D."/>
            <person name="Cohen-Gonsaud M."/>
            <person name="Mukamolova G.V."/>
        </authorList>
    </citation>
    <scope>FUNCTION IN VIRULENCE</scope>
    <scope>DISRUPTION PHENOTYPE</scope>
</reference>
<reference key="4">
    <citation type="journal article" date="2014" name="J. Biol. Chem.">
        <title>Oleoyl coenzyme A regulates interaction of transcriptional regulator RaaS (Rv1219c) with DNA in mycobacteria.</title>
        <authorList>
            <person name="Turapov O."/>
            <person name="Waddell S.J."/>
            <person name="Burke B."/>
            <person name="Glenn S."/>
            <person name="Sarybaeva A.A."/>
            <person name="Tudo G."/>
            <person name="Labesse G."/>
            <person name="Young D.I."/>
            <person name="Young M."/>
            <person name="Andrew P.W."/>
            <person name="Butcher P.D."/>
            <person name="Cohen-Gonsaud M."/>
            <person name="Mukamolova G.V."/>
        </authorList>
    </citation>
    <scope>FUNCTION</scope>
    <scope>DNA-BINDING</scope>
    <scope>ACTIVITY REGULATION</scope>
    <scope>SUBUNIT</scope>
    <scope>INTERACTION WITH LONG CHAIN ACYL-COA</scope>
    <scope>MUTAGENESIS OF ARG-144 AND TYR-174</scope>
</reference>
<reference evidence="8" key="5">
    <citation type="journal article" date="2014" name="Protein Sci.">
        <title>Crystal structure of the transcriptional regulator Rv1219c of Mycobacterium tuberculosis.</title>
        <authorList>
            <person name="Kumar N."/>
            <person name="Radhakrishnan A."/>
            <person name="Wright C.C."/>
            <person name="Chou T.H."/>
            <person name="Lei H.T."/>
            <person name="Bolla J.R."/>
            <person name="Tringides M.L."/>
            <person name="Rajashankar K.R."/>
            <person name="Su C.C."/>
            <person name="Purdy G.E."/>
            <person name="Yu E.W."/>
        </authorList>
    </citation>
    <scope>X-RAY CRYSTALLOGRAPHY (2.99 ANGSTROMS)</scope>
    <scope>FUNCTION</scope>
    <scope>DNA-BINDING</scope>
    <scope>SUBUNIT</scope>
    <scope>INTERACTION WITH DRUGS</scope>
    <scope>INDUCTION</scope>
    <scope>DOMAIN</scope>
    <source>
        <strain>H37Rv</strain>
    </source>
</reference>
<accession>O86312</accession>
<accession>F2GFW9</accession>
<accession>I6XXG2</accession>
<accession>Q7D8L0</accession>
<evidence type="ECO:0000255" key="1">
    <source>
        <dbReference type="PROSITE-ProRule" id="PRU00335"/>
    </source>
</evidence>
<evidence type="ECO:0000269" key="2">
    <source>
    </source>
</evidence>
<evidence type="ECO:0000269" key="3">
    <source>
    </source>
</evidence>
<evidence type="ECO:0000269" key="4">
    <source>
    </source>
</evidence>
<evidence type="ECO:0000303" key="5">
    <source>
    </source>
</evidence>
<evidence type="ECO:0000305" key="6"/>
<evidence type="ECO:0000312" key="7">
    <source>
        <dbReference type="EMBL" id="CCP43975.1"/>
    </source>
</evidence>
<evidence type="ECO:0007744" key="8">
    <source>
        <dbReference type="PDB" id="4NN1"/>
    </source>
</evidence>
<evidence type="ECO:0007829" key="9">
    <source>
        <dbReference type="PDB" id="4NN1"/>
    </source>
</evidence>
<keyword id="KW-0002">3D-structure</keyword>
<keyword id="KW-0238">DNA-binding</keyword>
<keyword id="KW-1185">Reference proteome</keyword>
<keyword id="KW-0678">Repressor</keyword>
<keyword id="KW-0804">Transcription</keyword>
<keyword id="KW-0805">Transcription regulation</keyword>
<proteinExistence type="evidence at protein level"/>
<organism>
    <name type="scientific">Mycobacterium tuberculosis (strain ATCC 25618 / H37Rv)</name>
    <dbReference type="NCBI Taxonomy" id="83332"/>
    <lineage>
        <taxon>Bacteria</taxon>
        <taxon>Bacillati</taxon>
        <taxon>Actinomycetota</taxon>
        <taxon>Actinomycetes</taxon>
        <taxon>Mycobacteriales</taxon>
        <taxon>Mycobacteriaceae</taxon>
        <taxon>Mycobacterium</taxon>
        <taxon>Mycobacterium tuberculosis complex</taxon>
    </lineage>
</organism>
<dbReference type="EMBL" id="AL123456">
    <property type="protein sequence ID" value="CCP43975.1"/>
    <property type="molecule type" value="Genomic_DNA"/>
</dbReference>
<dbReference type="RefSeq" id="NP_215735.1">
    <property type="nucleotide sequence ID" value="NC_000962.3"/>
</dbReference>
<dbReference type="RefSeq" id="WP_003406254.1">
    <property type="nucleotide sequence ID" value="NZ_NVQJ01000039.1"/>
</dbReference>
<dbReference type="PDB" id="4NN1">
    <property type="method" value="X-ray"/>
    <property type="resolution" value="2.99 A"/>
    <property type="chains" value="A=1-212"/>
</dbReference>
<dbReference type="PDBsum" id="4NN1"/>
<dbReference type="SMR" id="O86312"/>
<dbReference type="STRING" id="83332.Rv1219c"/>
<dbReference type="PaxDb" id="83332-Rv1219c"/>
<dbReference type="DNASU" id="888582"/>
<dbReference type="GeneID" id="45425189"/>
<dbReference type="GeneID" id="888582"/>
<dbReference type="KEGG" id="mtu:Rv1219c"/>
<dbReference type="KEGG" id="mtv:RVBD_1219c"/>
<dbReference type="PATRIC" id="fig|83332.111.peg.1362"/>
<dbReference type="TubercuList" id="Rv1219c"/>
<dbReference type="eggNOG" id="COG1309">
    <property type="taxonomic scope" value="Bacteria"/>
</dbReference>
<dbReference type="InParanoid" id="O86312"/>
<dbReference type="OrthoDB" id="3403733at2"/>
<dbReference type="PhylomeDB" id="O86312"/>
<dbReference type="EvolutionaryTrace" id="O86312"/>
<dbReference type="Proteomes" id="UP000001584">
    <property type="component" value="Chromosome"/>
</dbReference>
<dbReference type="GO" id="GO:0003700">
    <property type="term" value="F:DNA-binding transcription factor activity"/>
    <property type="evidence" value="ECO:0000318"/>
    <property type="project" value="GO_Central"/>
</dbReference>
<dbReference type="GO" id="GO:0000976">
    <property type="term" value="F:transcription cis-regulatory region binding"/>
    <property type="evidence" value="ECO:0000318"/>
    <property type="project" value="GO_Central"/>
</dbReference>
<dbReference type="GO" id="GO:0006355">
    <property type="term" value="P:regulation of DNA-templated transcription"/>
    <property type="evidence" value="ECO:0000318"/>
    <property type="project" value="GO_Central"/>
</dbReference>
<dbReference type="Gene3D" id="1.10.357.10">
    <property type="entry name" value="Tetracycline Repressor, domain 2"/>
    <property type="match status" value="1"/>
</dbReference>
<dbReference type="InterPro" id="IPR009057">
    <property type="entry name" value="Homeodomain-like_sf"/>
</dbReference>
<dbReference type="InterPro" id="IPR050109">
    <property type="entry name" value="HTH-type_TetR-like_transc_reg"/>
</dbReference>
<dbReference type="InterPro" id="IPR001647">
    <property type="entry name" value="HTH_TetR"/>
</dbReference>
<dbReference type="InterPro" id="IPR036271">
    <property type="entry name" value="Tet_transcr_reg_TetR-rel_C_sf"/>
</dbReference>
<dbReference type="InterPro" id="IPR041484">
    <property type="entry name" value="TetR_C_25"/>
</dbReference>
<dbReference type="PANTHER" id="PTHR30055:SF146">
    <property type="entry name" value="HTH-TYPE TRANSCRIPTIONAL DUAL REGULATOR CECR"/>
    <property type="match status" value="1"/>
</dbReference>
<dbReference type="PANTHER" id="PTHR30055">
    <property type="entry name" value="HTH-TYPE TRANSCRIPTIONAL REGULATOR RUTR"/>
    <property type="match status" value="1"/>
</dbReference>
<dbReference type="Pfam" id="PF17933">
    <property type="entry name" value="TetR_C_25"/>
    <property type="match status" value="1"/>
</dbReference>
<dbReference type="Pfam" id="PF00440">
    <property type="entry name" value="TetR_N"/>
    <property type="match status" value="1"/>
</dbReference>
<dbReference type="PRINTS" id="PR00455">
    <property type="entry name" value="HTHTETR"/>
</dbReference>
<dbReference type="SUPFAM" id="SSF46689">
    <property type="entry name" value="Homeodomain-like"/>
    <property type="match status" value="1"/>
</dbReference>
<dbReference type="SUPFAM" id="SSF48498">
    <property type="entry name" value="Tetracyclin repressor-like, C-terminal domain"/>
    <property type="match status" value="1"/>
</dbReference>
<dbReference type="PROSITE" id="PS50977">
    <property type="entry name" value="HTH_TETR_2"/>
    <property type="match status" value="1"/>
</dbReference>
<gene>
    <name evidence="5" type="primary">raaS</name>
    <name evidence="7" type="ordered locus">Rv1219c</name>
</gene>
<feature type="chain" id="PRO_0000447332" description="HTH-type transcriptional regulatory protein RaaS">
    <location>
        <begin position="1"/>
        <end position="212"/>
    </location>
</feature>
<feature type="domain" description="HTH tetR-type" evidence="1">
    <location>
        <begin position="6"/>
        <end position="65"/>
    </location>
</feature>
<feature type="DNA-binding region" description="H-T-H motif" evidence="1">
    <location>
        <begin position="28"/>
        <end position="47"/>
    </location>
</feature>
<feature type="mutagenesis site" description="Reduces DNA binding affinity and ligand binding." evidence="4">
    <original>R</original>
    <variation>A</variation>
    <location>
        <position position="144"/>
    </location>
</feature>
<feature type="mutagenesis site" description="Reduces DNA binding affinity and ligand binding." evidence="4">
    <original>Y</original>
    <variation>A</variation>
    <location>
        <position position="174"/>
    </location>
</feature>
<feature type="helix" evidence="9">
    <location>
        <begin position="7"/>
        <end position="23"/>
    </location>
</feature>
<feature type="helix" evidence="9">
    <location>
        <begin position="29"/>
        <end position="36"/>
    </location>
</feature>
<feature type="helix" evidence="9">
    <location>
        <begin position="40"/>
        <end position="47"/>
    </location>
</feature>
<feature type="helix" evidence="9">
    <location>
        <begin position="50"/>
        <end position="74"/>
    </location>
</feature>
<feature type="helix" evidence="9">
    <location>
        <begin position="79"/>
        <end position="86"/>
    </location>
</feature>
<feature type="helix" evidence="9">
    <location>
        <begin position="87"/>
        <end position="91"/>
    </location>
</feature>
<feature type="helix" evidence="9">
    <location>
        <begin position="92"/>
        <end position="103"/>
    </location>
</feature>
<feature type="helix" evidence="9">
    <location>
        <begin position="107"/>
        <end position="129"/>
    </location>
</feature>
<feature type="helix" evidence="9">
    <location>
        <begin position="139"/>
        <end position="159"/>
    </location>
</feature>
<feature type="strand" evidence="9">
    <location>
        <begin position="161"/>
        <end position="163"/>
    </location>
</feature>
<feature type="helix" evidence="9">
    <location>
        <begin position="167"/>
        <end position="177"/>
    </location>
</feature>
<feature type="helix" evidence="9">
    <location>
        <begin position="179"/>
        <end position="188"/>
    </location>
</feature>
<feature type="strand" evidence="9">
    <location>
        <begin position="190"/>
        <end position="193"/>
    </location>
</feature>
<feature type="helix" evidence="9">
    <location>
        <begin position="195"/>
        <end position="209"/>
    </location>
</feature>
<protein>
    <recommendedName>
        <fullName evidence="6">HTH-type transcriptional regulatory protein RaaS</fullName>
    </recommendedName>
    <alternativeName>
        <fullName evidence="5">Regulator of antimicrobial-assisted survival</fullName>
    </alternativeName>
</protein>